<proteinExistence type="evidence at transcript level"/>
<organism>
    <name type="scientific">Gallus gallus</name>
    <name type="common">Chicken</name>
    <dbReference type="NCBI Taxonomy" id="9031"/>
    <lineage>
        <taxon>Eukaryota</taxon>
        <taxon>Metazoa</taxon>
        <taxon>Chordata</taxon>
        <taxon>Craniata</taxon>
        <taxon>Vertebrata</taxon>
        <taxon>Euteleostomi</taxon>
        <taxon>Archelosauria</taxon>
        <taxon>Archosauria</taxon>
        <taxon>Dinosauria</taxon>
        <taxon>Saurischia</taxon>
        <taxon>Theropoda</taxon>
        <taxon>Coelurosauria</taxon>
        <taxon>Aves</taxon>
        <taxon>Neognathae</taxon>
        <taxon>Galloanserae</taxon>
        <taxon>Galliformes</taxon>
        <taxon>Phasianidae</taxon>
        <taxon>Phasianinae</taxon>
        <taxon>Gallus</taxon>
    </lineage>
</organism>
<sequence>MASKGSNTDCMSCSVLNWEQVSRLHEVLTEVVPIHGRGNFPTLKITLKDIVQTVRSRLNEAGIAVHDVRLNGSAAGHVLVKDNGLGCKDLDLIFQVSLPSEAEFQLVRDVVLRSLLNFLPEGVSKLKISPVTLKEAYIQKLVKVSTESDRWSLISLSNKHGRNVELKFVDCIRRQFEFSVDSFQIILDSLLFYYDYSENPMSEHFHPTVIGESMYGDFEAAFDHLQNKLIATKNPEEIRGGGLLKYSNLLVRDFRPMDKDEIKTLERYMCSRFFIDFPDILDQQRKLETYLQNHFSKEERSKYDYLMILRRVVNESTVCLMGHERRQTLNLISLLALKVLAEQNIIPNATTVTCYYQPAPYVSDVNFSNYYLANPPVPYSQSYPTWLPCN</sequence>
<evidence type="ECO:0000250" key="1">
    <source>
        <dbReference type="UniProtKB" id="Q5VWP2"/>
    </source>
</evidence>
<evidence type="ECO:0000303" key="2">
    <source>
    </source>
</evidence>
<evidence type="ECO:0000305" key="3"/>
<dbReference type="EC" id="2.7.7.19" evidence="1"/>
<dbReference type="EMBL" id="AJ719839">
    <property type="protein sequence ID" value="CAG31498.1"/>
    <property type="molecule type" value="mRNA"/>
</dbReference>
<dbReference type="RefSeq" id="NP_001007973.1">
    <property type="nucleotide sequence ID" value="NM_001007972.1"/>
</dbReference>
<dbReference type="RefSeq" id="XP_015150068.1">
    <property type="nucleotide sequence ID" value="XM_015294582.1"/>
</dbReference>
<dbReference type="SMR" id="Q5ZL95"/>
<dbReference type="FunCoup" id="Q5ZL95">
    <property type="interactions" value="344"/>
</dbReference>
<dbReference type="STRING" id="9031.ENSGALP00000023291"/>
<dbReference type="PaxDb" id="9031-ENSGALP00000023291"/>
<dbReference type="Ensembl" id="ENSGALT00010054099.1">
    <property type="protein sequence ID" value="ENSGALP00010032630.1"/>
    <property type="gene ID" value="ENSGALG00010022233.1"/>
</dbReference>
<dbReference type="Ensembl" id="ENSGALT00010054120.1">
    <property type="protein sequence ID" value="ENSGALP00010032651.1"/>
    <property type="gene ID" value="ENSGALG00010022233.1"/>
</dbReference>
<dbReference type="Ensembl" id="ENSGALT00010054133.1">
    <property type="protein sequence ID" value="ENSGALP00010032664.1"/>
    <property type="gene ID" value="ENSGALG00010022233.1"/>
</dbReference>
<dbReference type="Ensembl" id="ENSGALT00010054141.1">
    <property type="protein sequence ID" value="ENSGALP00010032672.1"/>
    <property type="gene ID" value="ENSGALG00010022233.1"/>
</dbReference>
<dbReference type="Ensembl" id="ENSGALT00010054153.1">
    <property type="protein sequence ID" value="ENSGALP00010032684.1"/>
    <property type="gene ID" value="ENSGALG00010022233.1"/>
</dbReference>
<dbReference type="Ensembl" id="ENSGALT00010054158.1">
    <property type="protein sequence ID" value="ENSGALP00010032689.1"/>
    <property type="gene ID" value="ENSGALG00010022233.1"/>
</dbReference>
<dbReference type="Ensembl" id="ENSGALT00010054160.1">
    <property type="protein sequence ID" value="ENSGALP00010032691.1"/>
    <property type="gene ID" value="ENSGALG00010022233.1"/>
</dbReference>
<dbReference type="GeneID" id="426544"/>
<dbReference type="KEGG" id="gga:426544"/>
<dbReference type="CTD" id="426544"/>
<dbReference type="VEuPathDB" id="HostDB:geneid_426544"/>
<dbReference type="eggNOG" id="KOG3852">
    <property type="taxonomic scope" value="Eukaryota"/>
</dbReference>
<dbReference type="GeneTree" id="ENSGT00940000158856"/>
<dbReference type="HOGENOM" id="CLU_008115_2_0_1"/>
<dbReference type="InParanoid" id="Q5ZL95"/>
<dbReference type="OMA" id="TWDQVSR"/>
<dbReference type="OrthoDB" id="10065073at2759"/>
<dbReference type="PhylomeDB" id="Q5ZL95"/>
<dbReference type="PRO" id="PR:Q5ZL95"/>
<dbReference type="Proteomes" id="UP000000539">
    <property type="component" value="Chromosome 1"/>
</dbReference>
<dbReference type="GO" id="GO:0005813">
    <property type="term" value="C:centrosome"/>
    <property type="evidence" value="ECO:0000250"/>
    <property type="project" value="UniProtKB"/>
</dbReference>
<dbReference type="GO" id="GO:0005737">
    <property type="term" value="C:cytoplasm"/>
    <property type="evidence" value="ECO:0000250"/>
    <property type="project" value="UniProtKB"/>
</dbReference>
<dbReference type="GO" id="GO:0005654">
    <property type="term" value="C:nucleoplasm"/>
    <property type="evidence" value="ECO:0007669"/>
    <property type="project" value="Ensembl"/>
</dbReference>
<dbReference type="GO" id="GO:0005634">
    <property type="term" value="C:nucleus"/>
    <property type="evidence" value="ECO:0000250"/>
    <property type="project" value="UniProtKB"/>
</dbReference>
<dbReference type="GO" id="GO:1990817">
    <property type="term" value="F:poly(A) RNA polymerase activity"/>
    <property type="evidence" value="ECO:0000250"/>
    <property type="project" value="UniProtKB"/>
</dbReference>
<dbReference type="GO" id="GO:0003723">
    <property type="term" value="F:RNA binding"/>
    <property type="evidence" value="ECO:0007669"/>
    <property type="project" value="UniProtKB-KW"/>
</dbReference>
<dbReference type="GO" id="GO:0048255">
    <property type="term" value="P:mRNA stabilization"/>
    <property type="evidence" value="ECO:0000250"/>
    <property type="project" value="UniProtKB"/>
</dbReference>
<dbReference type="GO" id="GO:0045596">
    <property type="term" value="P:negative regulation of cell differentiation"/>
    <property type="evidence" value="ECO:0000250"/>
    <property type="project" value="UniProtKB"/>
</dbReference>
<dbReference type="InterPro" id="IPR012937">
    <property type="entry name" value="TET5"/>
</dbReference>
<dbReference type="PANTHER" id="PTHR12974">
    <property type="entry name" value="PRION-LIKE- Q/N-RICH -DOMAIN-BEARING PROTEIN PROTEIN 44"/>
    <property type="match status" value="1"/>
</dbReference>
<dbReference type="PANTHER" id="PTHR12974:SF34">
    <property type="entry name" value="TERMINAL NUCLEOTIDYLTRANSFERASE 5C"/>
    <property type="match status" value="1"/>
</dbReference>
<dbReference type="Pfam" id="PF07984">
    <property type="entry name" value="NTP_transf_7"/>
    <property type="match status" value="1"/>
</dbReference>
<dbReference type="SMART" id="SM01153">
    <property type="entry name" value="DUF1693"/>
    <property type="match status" value="1"/>
</dbReference>
<protein>
    <recommendedName>
        <fullName evidence="3">Terminal nucleotidyltransferase 5C</fullName>
        <ecNumber evidence="1">2.7.7.19</ecNumber>
    </recommendedName>
</protein>
<name>TET5C_CHICK</name>
<accession>Q5ZL95</accession>
<keyword id="KW-0963">Cytoplasm</keyword>
<keyword id="KW-0206">Cytoskeleton</keyword>
<keyword id="KW-0548">Nucleotidyltransferase</keyword>
<keyword id="KW-0539">Nucleus</keyword>
<keyword id="KW-1185">Reference proteome</keyword>
<keyword id="KW-0694">RNA-binding</keyword>
<keyword id="KW-0808">Transferase</keyword>
<gene>
    <name evidence="1" type="primary">TENT5C</name>
    <name evidence="1" type="synonym">FAM46C</name>
    <name evidence="2" type="ORF">RCJMB04_7b16</name>
</gene>
<reference key="1">
    <citation type="journal article" date="2005" name="Genome Biol.">
        <title>Full-length cDNAs from chicken bursal lymphocytes to facilitate gene function analysis.</title>
        <authorList>
            <person name="Caldwell R.B."/>
            <person name="Kierzek A.M."/>
            <person name="Arakawa H."/>
            <person name="Bezzubov Y."/>
            <person name="Zaim J."/>
            <person name="Fiedler P."/>
            <person name="Kutter S."/>
            <person name="Blagodatski A."/>
            <person name="Kostovska D."/>
            <person name="Koter M."/>
            <person name="Plachy J."/>
            <person name="Carninci P."/>
            <person name="Hayashizaki Y."/>
            <person name="Buerstedde J.-M."/>
        </authorList>
    </citation>
    <scope>NUCLEOTIDE SEQUENCE [LARGE SCALE MRNA]</scope>
    <source>
        <strain>CB</strain>
        <tissue>Bursa of Fabricius</tissue>
    </source>
</reference>
<comment type="function">
    <text evidence="1">Catalyzes the transfer of one adenosine molecule from an ATP to an mRNA poly(A) tail bearing a 3'-OH terminal group and enhances mRNA stability and gene expression.</text>
</comment>
<comment type="catalytic activity">
    <reaction evidence="1">
        <text>RNA(n) + ATP = RNA(n)-3'-adenine ribonucleotide + diphosphate</text>
        <dbReference type="Rhea" id="RHEA:11332"/>
        <dbReference type="Rhea" id="RHEA-COMP:14527"/>
        <dbReference type="Rhea" id="RHEA-COMP:17347"/>
        <dbReference type="ChEBI" id="CHEBI:30616"/>
        <dbReference type="ChEBI" id="CHEBI:33019"/>
        <dbReference type="ChEBI" id="CHEBI:140395"/>
        <dbReference type="ChEBI" id="CHEBI:173115"/>
        <dbReference type="EC" id="2.7.7.19"/>
    </reaction>
    <physiologicalReaction direction="left-to-right" evidence="1">
        <dbReference type="Rhea" id="RHEA:11333"/>
    </physiologicalReaction>
</comment>
<comment type="subcellular location">
    <subcellularLocation>
        <location evidence="1">Nucleus</location>
    </subcellularLocation>
    <subcellularLocation>
        <location evidence="1">Cytoplasm</location>
    </subcellularLocation>
    <subcellularLocation>
        <location evidence="1">Cytoplasm</location>
        <location evidence="1">Cytoskeleton</location>
        <location evidence="1">Microtubule organizing center</location>
        <location evidence="1">Centrosome</location>
    </subcellularLocation>
</comment>
<comment type="similarity">
    <text evidence="3">Belongs to the TENT family.</text>
</comment>
<feature type="chain" id="PRO_0000259937" description="Terminal nucleotidyltransferase 5C">
    <location>
        <begin position="1"/>
        <end position="390"/>
    </location>
</feature>